<comment type="similarity">
    <text evidence="1">Belongs to the bacterial ribosomal protein bS16 family.</text>
</comment>
<protein>
    <recommendedName>
        <fullName evidence="1">Small ribosomal subunit protein bS16</fullName>
    </recommendedName>
    <alternativeName>
        <fullName evidence="2">30S ribosomal protein S16</fullName>
    </alternativeName>
</protein>
<evidence type="ECO:0000255" key="1">
    <source>
        <dbReference type="HAMAP-Rule" id="MF_00385"/>
    </source>
</evidence>
<evidence type="ECO:0000305" key="2"/>
<sequence length="90" mass="10134">MAVKIRLKRMGAKKSPFYRIVVADSRSPRDGRFIETVGTYNPVAKPAEVKINEELALKWLQTGAKPSDTVRNLFSSQGIMEKFHNAKQGK</sequence>
<dbReference type="EMBL" id="CP000560">
    <property type="protein sequence ID" value="ABS73945.1"/>
    <property type="molecule type" value="Genomic_DNA"/>
</dbReference>
<dbReference type="RefSeq" id="WP_003154296.1">
    <property type="nucleotide sequence ID" value="NC_009725.2"/>
</dbReference>
<dbReference type="SMR" id="A7Z4L9"/>
<dbReference type="GeneID" id="93080715"/>
<dbReference type="KEGG" id="bay:RBAM_015820"/>
<dbReference type="HOGENOM" id="CLU_100590_5_0_9"/>
<dbReference type="Proteomes" id="UP000001120">
    <property type="component" value="Chromosome"/>
</dbReference>
<dbReference type="GO" id="GO:0005737">
    <property type="term" value="C:cytoplasm"/>
    <property type="evidence" value="ECO:0007669"/>
    <property type="project" value="UniProtKB-ARBA"/>
</dbReference>
<dbReference type="GO" id="GO:0015935">
    <property type="term" value="C:small ribosomal subunit"/>
    <property type="evidence" value="ECO:0007669"/>
    <property type="project" value="TreeGrafter"/>
</dbReference>
<dbReference type="GO" id="GO:0003735">
    <property type="term" value="F:structural constituent of ribosome"/>
    <property type="evidence" value="ECO:0007669"/>
    <property type="project" value="InterPro"/>
</dbReference>
<dbReference type="GO" id="GO:0006412">
    <property type="term" value="P:translation"/>
    <property type="evidence" value="ECO:0007669"/>
    <property type="project" value="UniProtKB-UniRule"/>
</dbReference>
<dbReference type="FunFam" id="3.30.1320.10:FF:000002">
    <property type="entry name" value="30S ribosomal protein S16"/>
    <property type="match status" value="1"/>
</dbReference>
<dbReference type="Gene3D" id="3.30.1320.10">
    <property type="match status" value="1"/>
</dbReference>
<dbReference type="HAMAP" id="MF_00385">
    <property type="entry name" value="Ribosomal_bS16"/>
    <property type="match status" value="1"/>
</dbReference>
<dbReference type="InterPro" id="IPR000307">
    <property type="entry name" value="Ribosomal_bS16"/>
</dbReference>
<dbReference type="InterPro" id="IPR020592">
    <property type="entry name" value="Ribosomal_bS16_CS"/>
</dbReference>
<dbReference type="InterPro" id="IPR023803">
    <property type="entry name" value="Ribosomal_bS16_dom_sf"/>
</dbReference>
<dbReference type="NCBIfam" id="TIGR00002">
    <property type="entry name" value="S16"/>
    <property type="match status" value="1"/>
</dbReference>
<dbReference type="PANTHER" id="PTHR12919">
    <property type="entry name" value="30S RIBOSOMAL PROTEIN S16"/>
    <property type="match status" value="1"/>
</dbReference>
<dbReference type="PANTHER" id="PTHR12919:SF20">
    <property type="entry name" value="SMALL RIBOSOMAL SUBUNIT PROTEIN BS16M"/>
    <property type="match status" value="1"/>
</dbReference>
<dbReference type="Pfam" id="PF00886">
    <property type="entry name" value="Ribosomal_S16"/>
    <property type="match status" value="1"/>
</dbReference>
<dbReference type="SUPFAM" id="SSF54565">
    <property type="entry name" value="Ribosomal protein S16"/>
    <property type="match status" value="1"/>
</dbReference>
<dbReference type="PROSITE" id="PS00732">
    <property type="entry name" value="RIBOSOMAL_S16"/>
    <property type="match status" value="1"/>
</dbReference>
<proteinExistence type="inferred from homology"/>
<accession>A7Z4L9</accession>
<name>RS16_BACVZ</name>
<feature type="chain" id="PRO_1000049212" description="Small ribosomal subunit protein bS16">
    <location>
        <begin position="1"/>
        <end position="90"/>
    </location>
</feature>
<organism>
    <name type="scientific">Bacillus velezensis (strain DSM 23117 / BGSC 10A6 / LMG 26770 / FZB42)</name>
    <name type="common">Bacillus amyloliquefaciens subsp. plantarum</name>
    <dbReference type="NCBI Taxonomy" id="326423"/>
    <lineage>
        <taxon>Bacteria</taxon>
        <taxon>Bacillati</taxon>
        <taxon>Bacillota</taxon>
        <taxon>Bacilli</taxon>
        <taxon>Bacillales</taxon>
        <taxon>Bacillaceae</taxon>
        <taxon>Bacillus</taxon>
        <taxon>Bacillus amyloliquefaciens group</taxon>
    </lineage>
</organism>
<keyword id="KW-0687">Ribonucleoprotein</keyword>
<keyword id="KW-0689">Ribosomal protein</keyword>
<gene>
    <name evidence="1" type="primary">rpsP</name>
    <name type="ordered locus">RBAM_015820</name>
</gene>
<reference key="1">
    <citation type="journal article" date="2007" name="Nat. Biotechnol.">
        <title>Comparative analysis of the complete genome sequence of the plant growth-promoting bacterium Bacillus amyloliquefaciens FZB42.</title>
        <authorList>
            <person name="Chen X.H."/>
            <person name="Koumoutsi A."/>
            <person name="Scholz R."/>
            <person name="Eisenreich A."/>
            <person name="Schneider K."/>
            <person name="Heinemeyer I."/>
            <person name="Morgenstern B."/>
            <person name="Voss B."/>
            <person name="Hess W.R."/>
            <person name="Reva O."/>
            <person name="Junge H."/>
            <person name="Voigt B."/>
            <person name="Jungblut P.R."/>
            <person name="Vater J."/>
            <person name="Suessmuth R."/>
            <person name="Liesegang H."/>
            <person name="Strittmatter A."/>
            <person name="Gottschalk G."/>
            <person name="Borriss R."/>
        </authorList>
    </citation>
    <scope>NUCLEOTIDE SEQUENCE [LARGE SCALE GENOMIC DNA]</scope>
    <source>
        <strain>DSM 23117 / BGSC 10A6 / LMG 26770 / FZB42</strain>
    </source>
</reference>